<accession>P59654</accession>
<dbReference type="EMBL" id="AE007317">
    <property type="protein sequence ID" value="AAK98848.1"/>
    <property type="molecule type" value="Genomic_DNA"/>
</dbReference>
<dbReference type="RefSeq" id="NP_357638.1">
    <property type="nucleotide sequence ID" value="NC_003098.1"/>
</dbReference>
<dbReference type="RefSeq" id="WP_000801613.1">
    <property type="nucleotide sequence ID" value="NC_003098.1"/>
</dbReference>
<dbReference type="SMR" id="P59654"/>
<dbReference type="STRING" id="171101.spr0044"/>
<dbReference type="KEGG" id="spr:spr0044"/>
<dbReference type="PATRIC" id="fig|171101.6.peg.52"/>
<dbReference type="eggNOG" id="COG0845">
    <property type="taxonomic scope" value="Bacteria"/>
</dbReference>
<dbReference type="HOGENOM" id="CLU_047946_0_0_9"/>
<dbReference type="Proteomes" id="UP000000586">
    <property type="component" value="Chromosome"/>
</dbReference>
<dbReference type="GO" id="GO:0005886">
    <property type="term" value="C:plasma membrane"/>
    <property type="evidence" value="ECO:0007669"/>
    <property type="project" value="UniProtKB-SubCell"/>
</dbReference>
<dbReference type="GO" id="GO:0030420">
    <property type="term" value="P:establishment of competence for transformation"/>
    <property type="evidence" value="ECO:0007669"/>
    <property type="project" value="UniProtKB-KW"/>
</dbReference>
<dbReference type="Gene3D" id="2.40.30.170">
    <property type="match status" value="1"/>
</dbReference>
<dbReference type="InterPro" id="IPR005696">
    <property type="entry name" value="MesE/LcnD"/>
</dbReference>
<dbReference type="InterPro" id="IPR050739">
    <property type="entry name" value="MFP"/>
</dbReference>
<dbReference type="NCBIfam" id="TIGR01000">
    <property type="entry name" value="bacteriocin_acc"/>
    <property type="match status" value="1"/>
</dbReference>
<dbReference type="PANTHER" id="PTHR30386">
    <property type="entry name" value="MEMBRANE FUSION SUBUNIT OF EMRAB-TOLC MULTIDRUG EFFLUX PUMP"/>
    <property type="match status" value="1"/>
</dbReference>
<dbReference type="PANTHER" id="PTHR30386:SF26">
    <property type="entry name" value="TRANSPORT PROTEIN COMB"/>
    <property type="match status" value="1"/>
</dbReference>
<proteinExistence type="inferred from homology"/>
<evidence type="ECO:0000250" key="1"/>
<evidence type="ECO:0000255" key="2"/>
<evidence type="ECO:0000305" key="3"/>
<organism>
    <name type="scientific">Streptococcus pneumoniae (strain ATCC BAA-255 / R6)</name>
    <dbReference type="NCBI Taxonomy" id="171101"/>
    <lineage>
        <taxon>Bacteria</taxon>
        <taxon>Bacillati</taxon>
        <taxon>Bacillota</taxon>
        <taxon>Bacilli</taxon>
        <taxon>Lactobacillales</taxon>
        <taxon>Streptococcaceae</taxon>
        <taxon>Streptococcus</taxon>
    </lineage>
</organism>
<gene>
    <name type="primary">comB</name>
    <name type="ordered locus">spr0044</name>
</gene>
<feature type="chain" id="PRO_0000201865" description="Transport protein ComB">
    <location>
        <begin position="1"/>
        <end position="449"/>
    </location>
</feature>
<feature type="topological domain" description="Cytoplasmic" evidence="1">
    <location>
        <begin position="1"/>
        <end position="20"/>
    </location>
</feature>
<feature type="transmembrane region" description="Helical" evidence="2">
    <location>
        <begin position="21"/>
        <end position="41"/>
    </location>
</feature>
<feature type="topological domain" description="Extracellular" evidence="1">
    <location>
        <begin position="42"/>
        <end position="449"/>
    </location>
</feature>
<reference key="1">
    <citation type="journal article" date="2001" name="J. Bacteriol.">
        <title>Genome of the bacterium Streptococcus pneumoniae strain R6.</title>
        <authorList>
            <person name="Hoskins J."/>
            <person name="Alborn W.E. Jr."/>
            <person name="Arnold J."/>
            <person name="Blaszczak L.C."/>
            <person name="Burgett S."/>
            <person name="DeHoff B.S."/>
            <person name="Estrem S.T."/>
            <person name="Fritz L."/>
            <person name="Fu D.-J."/>
            <person name="Fuller W."/>
            <person name="Geringer C."/>
            <person name="Gilmour R."/>
            <person name="Glass J.S."/>
            <person name="Khoja H."/>
            <person name="Kraft A.R."/>
            <person name="Lagace R.E."/>
            <person name="LeBlanc D.J."/>
            <person name="Lee L.N."/>
            <person name="Lefkowitz E.J."/>
            <person name="Lu J."/>
            <person name="Matsushima P."/>
            <person name="McAhren S.M."/>
            <person name="McHenney M."/>
            <person name="McLeaster K."/>
            <person name="Mundy C.W."/>
            <person name="Nicas T.I."/>
            <person name="Norris F.H."/>
            <person name="O'Gara M."/>
            <person name="Peery R.B."/>
            <person name="Robertson G.T."/>
            <person name="Rockey P."/>
            <person name="Sun P.-M."/>
            <person name="Winkler M.E."/>
            <person name="Yang Y."/>
            <person name="Young-Bellido M."/>
            <person name="Zhao G."/>
            <person name="Zook C.A."/>
            <person name="Baltz R.H."/>
            <person name="Jaskunas S.R."/>
            <person name="Rosteck P.R. Jr."/>
            <person name="Skatrud P.L."/>
            <person name="Glass J.I."/>
        </authorList>
    </citation>
    <scope>NUCLEOTIDE SEQUENCE [LARGE SCALE GENOMIC DNA]</scope>
    <source>
        <strain>ATCC BAA-255 / R6</strain>
    </source>
</reference>
<protein>
    <recommendedName>
        <fullName>Transport protein ComB</fullName>
    </recommendedName>
</protein>
<comment type="function">
    <text evidence="1">Required for induction of competence.</text>
</comment>
<comment type="subcellular location">
    <subcellularLocation>
        <location evidence="3">Cell membrane</location>
        <topology evidence="3">Single-pass membrane protein</topology>
    </subcellularLocation>
</comment>
<comment type="similarity">
    <text evidence="3">Belongs to the membrane fusion protein (MFP) (TC 8.A.1) family.</text>
</comment>
<sequence>MKPEFLESAEFYNRRYHNFSSSVIVPMALLLVFLLGFATVAEKEMSLSTRATVEPSRILANIQSTSNNRILVNHLEENKLVKKGDLLVQYQEGAEGVQAESYASQLDMLKDQKKQLEYLQKSLQEGENHFPEEDKFGYQATFRDYISQAGSLRASTSQQNETIASQNAAASQTQAEIGNLISQTEAKIRDYQTAKSAIETGTSLAGQNLAYSLYQSYKSQGEENPQTKVQAVAQVEAQISQLESSLATYRVQYAGSGTQQAYASGLSSQLESLKSQHLAKVGQELSLLAQKILEAESGKKVQGNLLDKGKITASEDGVLHLNPETSDSSMVAEGTLLAQLYPSLEREGKAKLTAYLSSKDVARIKVGDSVRYTTTHDAGNQLFLDSTITSIDATATKTEKGNFFKIEAETNLTSEQAEKLRYGVEGRLQMITGKKSYLRYYLDQFLNKE</sequence>
<name>COMB_STRR6</name>
<keyword id="KW-1003">Cell membrane</keyword>
<keyword id="KW-0178">Competence</keyword>
<keyword id="KW-0472">Membrane</keyword>
<keyword id="KW-1185">Reference proteome</keyword>
<keyword id="KW-0812">Transmembrane</keyword>
<keyword id="KW-1133">Transmembrane helix</keyword>
<keyword id="KW-0813">Transport</keyword>